<organism>
    <name type="scientific">Pseudomonas putida (strain ATCC 700007 / DSM 6899 / JCM 31910 / BCRC 17059 / LMG 24140 / F1)</name>
    <dbReference type="NCBI Taxonomy" id="351746"/>
    <lineage>
        <taxon>Bacteria</taxon>
        <taxon>Pseudomonadati</taxon>
        <taxon>Pseudomonadota</taxon>
        <taxon>Gammaproteobacteria</taxon>
        <taxon>Pseudomonadales</taxon>
        <taxon>Pseudomonadaceae</taxon>
        <taxon>Pseudomonas</taxon>
    </lineage>
</organism>
<sequence>MLPYPQIDPVALAIGPLKIHWYGLMYLIGIGGAWLLASRRLNRFDPTWSREKLSDLVFWLSMGVIVGGRLGYVLFYDLHAYLANPTLIFEVWKGGMSFHGGFIGVMLAALWFGKRNNKSFFELMDFVAPLVPIGLGAGRIGNFINAELWGKPTDVPWAMIFPPFSDPAQLPRHPSQLYQFALEGVALFVILWLFSRKPRPTMAVSGMFALFYGIFRFIVEFVRVPDAQLGYIAWGWLTMGQILCVPMILAGLGLIWWAYNRKPTAKPA</sequence>
<reference key="1">
    <citation type="submission" date="2007-05" db="EMBL/GenBank/DDBJ databases">
        <title>Complete sequence of Pseudomonas putida F1.</title>
        <authorList>
            <consortium name="US DOE Joint Genome Institute"/>
            <person name="Copeland A."/>
            <person name="Lucas S."/>
            <person name="Lapidus A."/>
            <person name="Barry K."/>
            <person name="Detter J.C."/>
            <person name="Glavina del Rio T."/>
            <person name="Hammon N."/>
            <person name="Israni S."/>
            <person name="Dalin E."/>
            <person name="Tice H."/>
            <person name="Pitluck S."/>
            <person name="Chain P."/>
            <person name="Malfatti S."/>
            <person name="Shin M."/>
            <person name="Vergez L."/>
            <person name="Schmutz J."/>
            <person name="Larimer F."/>
            <person name="Land M."/>
            <person name="Hauser L."/>
            <person name="Kyrpides N."/>
            <person name="Lykidis A."/>
            <person name="Parales R."/>
            <person name="Richardson P."/>
        </authorList>
    </citation>
    <scope>NUCLEOTIDE SEQUENCE [LARGE SCALE GENOMIC DNA]</scope>
    <source>
        <strain>ATCC 700007 / DSM 6899 / JCM 31910 / BCRC 17059 / LMG 24140 / F1</strain>
    </source>
</reference>
<comment type="function">
    <text evidence="1">Catalyzes the transfer of the diacylglyceryl group from phosphatidylglycerol to the sulfhydryl group of the N-terminal cysteine of a prolipoprotein, the first step in the formation of mature lipoproteins.</text>
</comment>
<comment type="catalytic activity">
    <reaction evidence="1">
        <text>L-cysteinyl-[prolipoprotein] + a 1,2-diacyl-sn-glycero-3-phospho-(1'-sn-glycerol) = an S-1,2-diacyl-sn-glyceryl-L-cysteinyl-[prolipoprotein] + sn-glycerol 1-phosphate + H(+)</text>
        <dbReference type="Rhea" id="RHEA:56712"/>
        <dbReference type="Rhea" id="RHEA-COMP:14679"/>
        <dbReference type="Rhea" id="RHEA-COMP:14680"/>
        <dbReference type="ChEBI" id="CHEBI:15378"/>
        <dbReference type="ChEBI" id="CHEBI:29950"/>
        <dbReference type="ChEBI" id="CHEBI:57685"/>
        <dbReference type="ChEBI" id="CHEBI:64716"/>
        <dbReference type="ChEBI" id="CHEBI:140658"/>
        <dbReference type="EC" id="2.5.1.145"/>
    </reaction>
</comment>
<comment type="pathway">
    <text evidence="1">Protein modification; lipoprotein biosynthesis (diacylglyceryl transfer).</text>
</comment>
<comment type="subcellular location">
    <subcellularLocation>
        <location evidence="1">Cell inner membrane</location>
        <topology evidence="1">Multi-pass membrane protein</topology>
    </subcellularLocation>
</comment>
<comment type="similarity">
    <text evidence="1">Belongs to the Lgt family.</text>
</comment>
<keyword id="KW-0997">Cell inner membrane</keyword>
<keyword id="KW-1003">Cell membrane</keyword>
<keyword id="KW-0472">Membrane</keyword>
<keyword id="KW-0808">Transferase</keyword>
<keyword id="KW-0812">Transmembrane</keyword>
<keyword id="KW-1133">Transmembrane helix</keyword>
<name>LGT_PSEP1</name>
<accession>A5WAK7</accession>
<proteinExistence type="inferred from homology"/>
<dbReference type="EC" id="2.5.1.145" evidence="1"/>
<dbReference type="EMBL" id="CP000712">
    <property type="protein sequence ID" value="ABQ81167.1"/>
    <property type="molecule type" value="Genomic_DNA"/>
</dbReference>
<dbReference type="SMR" id="A5WAK7"/>
<dbReference type="KEGG" id="ppf:Pput_5049"/>
<dbReference type="eggNOG" id="COG0682">
    <property type="taxonomic scope" value="Bacteria"/>
</dbReference>
<dbReference type="HOGENOM" id="CLU_013386_1_0_6"/>
<dbReference type="UniPathway" id="UPA00664"/>
<dbReference type="GO" id="GO:0005886">
    <property type="term" value="C:plasma membrane"/>
    <property type="evidence" value="ECO:0007669"/>
    <property type="project" value="UniProtKB-SubCell"/>
</dbReference>
<dbReference type="GO" id="GO:0008961">
    <property type="term" value="F:phosphatidylglycerol-prolipoprotein diacylglyceryl transferase activity"/>
    <property type="evidence" value="ECO:0007669"/>
    <property type="project" value="UniProtKB-UniRule"/>
</dbReference>
<dbReference type="GO" id="GO:0042158">
    <property type="term" value="P:lipoprotein biosynthetic process"/>
    <property type="evidence" value="ECO:0007669"/>
    <property type="project" value="UniProtKB-UniRule"/>
</dbReference>
<dbReference type="HAMAP" id="MF_01147">
    <property type="entry name" value="Lgt"/>
    <property type="match status" value="1"/>
</dbReference>
<dbReference type="InterPro" id="IPR001640">
    <property type="entry name" value="Lgt"/>
</dbReference>
<dbReference type="NCBIfam" id="TIGR00544">
    <property type="entry name" value="lgt"/>
    <property type="match status" value="1"/>
</dbReference>
<dbReference type="PANTHER" id="PTHR30589:SF0">
    <property type="entry name" value="PHOSPHATIDYLGLYCEROL--PROLIPOPROTEIN DIACYLGLYCERYL TRANSFERASE"/>
    <property type="match status" value="1"/>
</dbReference>
<dbReference type="PANTHER" id="PTHR30589">
    <property type="entry name" value="PROLIPOPROTEIN DIACYLGLYCERYL TRANSFERASE"/>
    <property type="match status" value="1"/>
</dbReference>
<dbReference type="Pfam" id="PF01790">
    <property type="entry name" value="LGT"/>
    <property type="match status" value="1"/>
</dbReference>
<dbReference type="PROSITE" id="PS01311">
    <property type="entry name" value="LGT"/>
    <property type="match status" value="1"/>
</dbReference>
<feature type="chain" id="PRO_1000065482" description="Phosphatidylglycerol--prolipoprotein diacylglyceryl transferase">
    <location>
        <begin position="1"/>
        <end position="268"/>
    </location>
</feature>
<feature type="transmembrane region" description="Helical" evidence="1">
    <location>
        <begin position="10"/>
        <end position="30"/>
    </location>
</feature>
<feature type="transmembrane region" description="Helical" evidence="1">
    <location>
        <begin position="56"/>
        <end position="76"/>
    </location>
</feature>
<feature type="transmembrane region" description="Helical" evidence="1">
    <location>
        <begin position="92"/>
        <end position="112"/>
    </location>
</feature>
<feature type="transmembrane region" description="Helical" evidence="1">
    <location>
        <begin position="120"/>
        <end position="140"/>
    </location>
</feature>
<feature type="transmembrane region" description="Helical" evidence="1">
    <location>
        <begin position="174"/>
        <end position="194"/>
    </location>
</feature>
<feature type="transmembrane region" description="Helical" evidence="1">
    <location>
        <begin position="202"/>
        <end position="222"/>
    </location>
</feature>
<feature type="transmembrane region" description="Helical" evidence="1">
    <location>
        <begin position="236"/>
        <end position="256"/>
    </location>
</feature>
<feature type="binding site" evidence="1">
    <location>
        <position position="139"/>
    </location>
    <ligand>
        <name>a 1,2-diacyl-sn-glycero-3-phospho-(1'-sn-glycerol)</name>
        <dbReference type="ChEBI" id="CHEBI:64716"/>
    </ligand>
</feature>
<evidence type="ECO:0000255" key="1">
    <source>
        <dbReference type="HAMAP-Rule" id="MF_01147"/>
    </source>
</evidence>
<protein>
    <recommendedName>
        <fullName evidence="1">Phosphatidylglycerol--prolipoprotein diacylglyceryl transferase</fullName>
        <ecNumber evidence="1">2.5.1.145</ecNumber>
    </recommendedName>
</protein>
<gene>
    <name evidence="1" type="primary">lgt</name>
    <name type="ordered locus">Pput_5049</name>
</gene>